<keyword id="KW-1003">Cell membrane</keyword>
<keyword id="KW-0966">Cell projection</keyword>
<keyword id="KW-0969">Cilium</keyword>
<keyword id="KW-0297">G-protein coupled receptor</keyword>
<keyword id="KW-0325">Glycoprotein</keyword>
<keyword id="KW-0472">Membrane</keyword>
<keyword id="KW-0675">Receptor</keyword>
<keyword id="KW-1185">Reference proteome</keyword>
<keyword id="KW-0716">Sensory transduction</keyword>
<keyword id="KW-0919">Taste</keyword>
<keyword id="KW-0807">Transducer</keyword>
<keyword id="KW-0812">Transmembrane</keyword>
<keyword id="KW-1133">Transmembrane helix</keyword>
<gene>
    <name type="primary">TAS2R4</name>
</gene>
<sequence length="299" mass="33841">MLRLFYFSAIIASVILNFVGIIMNLFITVVNCKTWVKSHRISSSDRILFSLGITRFLMLGLFLVNTIYFVSSNTERSVYLSAFFVLCFMFLDSSSVWFVTLLNILYCVKITNFQHSVFLLLKRNISPKIPRLLLACVLISAFTTCLYITLSQASPFPELVTTRNNTSFNISEGILSLVVSLVLSSSLQFIINVTSASLLIHSLRRHIQKMQKNATGFWNPQTEAHVGAMKLMVYFLILYIPYSVATLVQYLPFYAGMDMGTKSICLIFATLYSPGHSVLIIITHPKLKTTAKKILCFKK</sequence>
<dbReference type="EMBL" id="AF227131">
    <property type="protein sequence ID" value="AAF43904.1"/>
    <property type="molecule type" value="Genomic_DNA"/>
</dbReference>
<dbReference type="EMBL" id="AY724958">
    <property type="protein sequence ID" value="AAU21154.1"/>
    <property type="molecule type" value="Genomic_DNA"/>
</dbReference>
<dbReference type="EMBL" id="AC004979">
    <property type="protein sequence ID" value="AAS02039.1"/>
    <property type="molecule type" value="Genomic_DNA"/>
</dbReference>
<dbReference type="CCDS" id="CCDS5868.1"/>
<dbReference type="RefSeq" id="NP_058640.1">
    <property type="nucleotide sequence ID" value="NM_016944.2"/>
</dbReference>
<dbReference type="SMR" id="Q9NYW5"/>
<dbReference type="FunCoup" id="Q9NYW5">
    <property type="interactions" value="229"/>
</dbReference>
<dbReference type="STRING" id="9606.ENSP00000247881"/>
<dbReference type="BindingDB" id="Q9NYW5"/>
<dbReference type="ChEMBL" id="CHEMBL3309107"/>
<dbReference type="DrugCentral" id="Q9NYW5"/>
<dbReference type="GuidetoPHARMACOLOGY" id="661"/>
<dbReference type="GlyCosmos" id="Q9NYW5">
    <property type="glycosylation" value="3 sites, No reported glycans"/>
</dbReference>
<dbReference type="GlyGen" id="Q9NYW5">
    <property type="glycosylation" value="3 sites"/>
</dbReference>
<dbReference type="BioMuta" id="TAS2R4"/>
<dbReference type="DMDM" id="29839665"/>
<dbReference type="PaxDb" id="9606-ENSP00000247881"/>
<dbReference type="PeptideAtlas" id="Q9NYW5"/>
<dbReference type="Antibodypedia" id="32508">
    <property type="antibodies" value="41 antibodies from 16 providers"/>
</dbReference>
<dbReference type="DNASU" id="50832"/>
<dbReference type="Ensembl" id="ENST00000247881.4">
    <property type="protein sequence ID" value="ENSP00000247881.3"/>
    <property type="gene ID" value="ENSG00000127364.4"/>
</dbReference>
<dbReference type="GeneID" id="50832"/>
<dbReference type="KEGG" id="hsa:50832"/>
<dbReference type="MANE-Select" id="ENST00000247881.4">
    <property type="protein sequence ID" value="ENSP00000247881.3"/>
    <property type="RefSeq nucleotide sequence ID" value="NM_016944.2"/>
    <property type="RefSeq protein sequence ID" value="NP_058640.1"/>
</dbReference>
<dbReference type="UCSC" id="uc003vwq.2">
    <property type="organism name" value="human"/>
</dbReference>
<dbReference type="AGR" id="HGNC:14911"/>
<dbReference type="CTD" id="50832"/>
<dbReference type="DisGeNET" id="50832"/>
<dbReference type="GeneCards" id="TAS2R4"/>
<dbReference type="HGNC" id="HGNC:14911">
    <property type="gene designation" value="TAS2R4"/>
</dbReference>
<dbReference type="HPA" id="ENSG00000127364">
    <property type="expression patterns" value="Tissue enriched (brain)"/>
</dbReference>
<dbReference type="MIM" id="604869">
    <property type="type" value="gene"/>
</dbReference>
<dbReference type="neXtProt" id="NX_Q9NYW5"/>
<dbReference type="OpenTargets" id="ENSG00000127364"/>
<dbReference type="PharmGKB" id="PA37923"/>
<dbReference type="VEuPathDB" id="HostDB:ENSG00000127364"/>
<dbReference type="eggNOG" id="ENOG502S2SI">
    <property type="taxonomic scope" value="Eukaryota"/>
</dbReference>
<dbReference type="GeneTree" id="ENSGT01100000263477"/>
<dbReference type="HOGENOM" id="CLU_072337_3_0_1"/>
<dbReference type="InParanoid" id="Q9NYW5"/>
<dbReference type="OMA" id="MKLMIYF"/>
<dbReference type="OrthoDB" id="9449902at2759"/>
<dbReference type="PAN-GO" id="Q9NYW5">
    <property type="GO annotations" value="3 GO annotations based on evolutionary models"/>
</dbReference>
<dbReference type="PhylomeDB" id="Q9NYW5"/>
<dbReference type="TreeFam" id="TF335891"/>
<dbReference type="PathwayCommons" id="Q9NYW5"/>
<dbReference type="Reactome" id="R-HSA-418594">
    <property type="pathway name" value="G alpha (i) signalling events"/>
</dbReference>
<dbReference type="Reactome" id="R-HSA-420499">
    <property type="pathway name" value="Class C/3 (Metabotropic glutamate/pheromone receptors)"/>
</dbReference>
<dbReference type="Reactome" id="R-HSA-9717207">
    <property type="pathway name" value="Sensory perception of sweet, bitter, and umami (glutamate) taste"/>
</dbReference>
<dbReference type="BioGRID-ORCS" id="50832">
    <property type="hits" value="2 hits in 1137 CRISPR screens"/>
</dbReference>
<dbReference type="GeneWiki" id="TAS2R4"/>
<dbReference type="GenomeRNAi" id="50832"/>
<dbReference type="Pharos" id="Q9NYW5">
    <property type="development level" value="Tchem"/>
</dbReference>
<dbReference type="PRO" id="PR:Q9NYW5"/>
<dbReference type="Proteomes" id="UP000005640">
    <property type="component" value="Chromosome 7"/>
</dbReference>
<dbReference type="RNAct" id="Q9NYW5">
    <property type="molecule type" value="protein"/>
</dbReference>
<dbReference type="Bgee" id="ENSG00000127364">
    <property type="expression patterns" value="Expressed in primordial germ cell in gonad and 102 other cell types or tissues"/>
</dbReference>
<dbReference type="GO" id="GO:0060170">
    <property type="term" value="C:ciliary membrane"/>
    <property type="evidence" value="ECO:0007669"/>
    <property type="project" value="UniProtKB-SubCell"/>
</dbReference>
<dbReference type="GO" id="GO:0016020">
    <property type="term" value="C:membrane"/>
    <property type="evidence" value="ECO:0000318"/>
    <property type="project" value="GO_Central"/>
</dbReference>
<dbReference type="GO" id="GO:0005886">
    <property type="term" value="C:plasma membrane"/>
    <property type="evidence" value="ECO:0000304"/>
    <property type="project" value="Reactome"/>
</dbReference>
<dbReference type="GO" id="GO:0033038">
    <property type="term" value="F:bitter taste receptor activity"/>
    <property type="evidence" value="ECO:0000314"/>
    <property type="project" value="UniProtKB"/>
</dbReference>
<dbReference type="GO" id="GO:0004930">
    <property type="term" value="F:G protein-coupled receptor activity"/>
    <property type="evidence" value="ECO:0007669"/>
    <property type="project" value="UniProtKB-KW"/>
</dbReference>
<dbReference type="GO" id="GO:0008527">
    <property type="term" value="F:taste receptor activity"/>
    <property type="evidence" value="ECO:0000304"/>
    <property type="project" value="UniProtKB"/>
</dbReference>
<dbReference type="GO" id="GO:0001580">
    <property type="term" value="P:detection of chemical stimulus involved in sensory perception of bitter taste"/>
    <property type="evidence" value="ECO:0000314"/>
    <property type="project" value="UniProtKB"/>
</dbReference>
<dbReference type="GO" id="GO:0007585">
    <property type="term" value="P:respiratory gaseous exchange by respiratory system"/>
    <property type="evidence" value="ECO:0007669"/>
    <property type="project" value="Ensembl"/>
</dbReference>
<dbReference type="CDD" id="cd15013">
    <property type="entry name" value="7tm_TAS2R4"/>
    <property type="match status" value="1"/>
</dbReference>
<dbReference type="FunFam" id="1.20.1070.10:FF:000055">
    <property type="entry name" value="Taste receptor type 2"/>
    <property type="match status" value="1"/>
</dbReference>
<dbReference type="Gene3D" id="1.20.1070.10">
    <property type="entry name" value="Rhodopsin 7-helix transmembrane proteins"/>
    <property type="match status" value="1"/>
</dbReference>
<dbReference type="InterPro" id="IPR007960">
    <property type="entry name" value="TAS2R"/>
</dbReference>
<dbReference type="InterPro" id="IPR030055">
    <property type="entry name" value="TAS2R4"/>
</dbReference>
<dbReference type="PANTHER" id="PTHR11394">
    <property type="entry name" value="TASTE RECEPTOR TYPE 2"/>
    <property type="match status" value="1"/>
</dbReference>
<dbReference type="PANTHER" id="PTHR11394:SF55">
    <property type="entry name" value="TASTE RECEPTOR TYPE 2 MEMBER 4"/>
    <property type="match status" value="1"/>
</dbReference>
<dbReference type="Pfam" id="PF05296">
    <property type="entry name" value="TAS2R"/>
    <property type="match status" value="1"/>
</dbReference>
<dbReference type="SUPFAM" id="SSF81321">
    <property type="entry name" value="Family A G protein-coupled receptor-like"/>
    <property type="match status" value="1"/>
</dbReference>
<organism>
    <name type="scientific">Homo sapiens</name>
    <name type="common">Human</name>
    <dbReference type="NCBI Taxonomy" id="9606"/>
    <lineage>
        <taxon>Eukaryota</taxon>
        <taxon>Metazoa</taxon>
        <taxon>Chordata</taxon>
        <taxon>Craniata</taxon>
        <taxon>Vertebrata</taxon>
        <taxon>Euteleostomi</taxon>
        <taxon>Mammalia</taxon>
        <taxon>Eutheria</taxon>
        <taxon>Euarchontoglires</taxon>
        <taxon>Primates</taxon>
        <taxon>Haplorrhini</taxon>
        <taxon>Catarrhini</taxon>
        <taxon>Hominidae</taxon>
        <taxon>Homo</taxon>
    </lineage>
</organism>
<name>TA2R4_HUMAN</name>
<reference key="1">
    <citation type="journal article" date="2000" name="Cell">
        <title>A novel family of mammalian taste receptors.</title>
        <authorList>
            <person name="Adler E."/>
            <person name="Hoon M.A."/>
            <person name="Mueller K.L."/>
            <person name="Chandrashekar J."/>
            <person name="Ryba N.J.P."/>
            <person name="Zuker C.S."/>
        </authorList>
    </citation>
    <scope>NUCLEOTIDE SEQUENCE [GENOMIC DNA]</scope>
    <scope>TOPOLOGY</scope>
</reference>
<reference key="2">
    <citation type="journal article" date="2005" name="Mol. Biol. Evol.">
        <title>Evolution of bitter taste receptors in humans and apes.</title>
        <authorList>
            <person name="Fischer A."/>
            <person name="Gilad Y."/>
            <person name="Man O."/>
            <person name="Paeaebo S."/>
        </authorList>
    </citation>
    <scope>NUCLEOTIDE SEQUENCE [GENOMIC DNA]</scope>
</reference>
<reference key="3">
    <citation type="journal article" date="2003" name="Nature">
        <title>The DNA sequence of human chromosome 7.</title>
        <authorList>
            <person name="Hillier L.W."/>
            <person name="Fulton R.S."/>
            <person name="Fulton L.A."/>
            <person name="Graves T.A."/>
            <person name="Pepin K.H."/>
            <person name="Wagner-McPherson C."/>
            <person name="Layman D."/>
            <person name="Maas J."/>
            <person name="Jaeger S."/>
            <person name="Walker R."/>
            <person name="Wylie K."/>
            <person name="Sekhon M."/>
            <person name="Becker M.C."/>
            <person name="O'Laughlin M.D."/>
            <person name="Schaller M.E."/>
            <person name="Fewell G.A."/>
            <person name="Delehaunty K.D."/>
            <person name="Miner T.L."/>
            <person name="Nash W.E."/>
            <person name="Cordes M."/>
            <person name="Du H."/>
            <person name="Sun H."/>
            <person name="Edwards J."/>
            <person name="Bradshaw-Cordum H."/>
            <person name="Ali J."/>
            <person name="Andrews S."/>
            <person name="Isak A."/>
            <person name="Vanbrunt A."/>
            <person name="Nguyen C."/>
            <person name="Du F."/>
            <person name="Lamar B."/>
            <person name="Courtney L."/>
            <person name="Kalicki J."/>
            <person name="Ozersky P."/>
            <person name="Bielicki L."/>
            <person name="Scott K."/>
            <person name="Holmes A."/>
            <person name="Harkins R."/>
            <person name="Harris A."/>
            <person name="Strong C.M."/>
            <person name="Hou S."/>
            <person name="Tomlinson C."/>
            <person name="Dauphin-Kohlberg S."/>
            <person name="Kozlowicz-Reilly A."/>
            <person name="Leonard S."/>
            <person name="Rohlfing T."/>
            <person name="Rock S.M."/>
            <person name="Tin-Wollam A.-M."/>
            <person name="Abbott A."/>
            <person name="Minx P."/>
            <person name="Maupin R."/>
            <person name="Strowmatt C."/>
            <person name="Latreille P."/>
            <person name="Miller N."/>
            <person name="Johnson D."/>
            <person name="Murray J."/>
            <person name="Woessner J.P."/>
            <person name="Wendl M.C."/>
            <person name="Yang S.-P."/>
            <person name="Schultz B.R."/>
            <person name="Wallis J.W."/>
            <person name="Spieth J."/>
            <person name="Bieri T.A."/>
            <person name="Nelson J.O."/>
            <person name="Berkowicz N."/>
            <person name="Wohldmann P.E."/>
            <person name="Cook L.L."/>
            <person name="Hickenbotham M.T."/>
            <person name="Eldred J."/>
            <person name="Williams D."/>
            <person name="Bedell J.A."/>
            <person name="Mardis E.R."/>
            <person name="Clifton S.W."/>
            <person name="Chissoe S.L."/>
            <person name="Marra M.A."/>
            <person name="Raymond C."/>
            <person name="Haugen E."/>
            <person name="Gillett W."/>
            <person name="Zhou Y."/>
            <person name="James R."/>
            <person name="Phelps K."/>
            <person name="Iadanoto S."/>
            <person name="Bubb K."/>
            <person name="Simms E."/>
            <person name="Levy R."/>
            <person name="Clendenning J."/>
            <person name="Kaul R."/>
            <person name="Kent W.J."/>
            <person name="Furey T.S."/>
            <person name="Baertsch R.A."/>
            <person name="Brent M.R."/>
            <person name="Keibler E."/>
            <person name="Flicek P."/>
            <person name="Bork P."/>
            <person name="Suyama M."/>
            <person name="Bailey J.A."/>
            <person name="Portnoy M.E."/>
            <person name="Torrents D."/>
            <person name="Chinwalla A.T."/>
            <person name="Gish W.R."/>
            <person name="Eddy S.R."/>
            <person name="McPherson J.D."/>
            <person name="Olson M.V."/>
            <person name="Eichler E.E."/>
            <person name="Green E.D."/>
            <person name="Waterston R.H."/>
            <person name="Wilson R.K."/>
        </authorList>
    </citation>
    <scope>NUCLEOTIDE SEQUENCE [LARGE SCALE GENOMIC DNA]</scope>
</reference>
<reference key="4">
    <citation type="journal article" date="2000" name="Cell">
        <title>T2Rs function as bitter taste receptors.</title>
        <authorList>
            <person name="Chandrashekar J."/>
            <person name="Mueller K.L."/>
            <person name="Hoon M.A."/>
            <person name="Adler E."/>
            <person name="Feng L."/>
            <person name="Guo W."/>
            <person name="Zuker C.S."/>
            <person name="Ryba N.J.P."/>
        </authorList>
    </citation>
    <scope>CHARACTERIZATION</scope>
</reference>
<reference key="5">
    <citation type="journal article" date="2002" name="Curr. Opin. Neurobiol.">
        <title>Receptors for bitter and sweet taste.</title>
        <authorList>
            <person name="Montmayeur J.-P."/>
            <person name="Matsunami H."/>
        </authorList>
    </citation>
    <scope>REVIEW</scope>
</reference>
<reference key="6">
    <citation type="journal article" date="2002" name="J. Biol. Chem.">
        <title>Molecular mechanisms of bitter and sweet taste transduction.</title>
        <authorList>
            <person name="Margolskee R.F."/>
        </authorList>
    </citation>
    <scope>REVIEW</scope>
</reference>
<reference key="7">
    <citation type="journal article" date="2003" name="Cell">
        <title>Coding of sweet, bitter, and umami tastes: different receptor cells sharing similar signaling pathways.</title>
        <authorList>
            <person name="Zhang Y."/>
            <person name="Hoon M.A."/>
            <person name="Chandrashekar J."/>
            <person name="Mueller K.L."/>
            <person name="Cook B."/>
            <person name="Wu D."/>
            <person name="Zuker C.S."/>
            <person name="Ryba N.J."/>
        </authorList>
    </citation>
    <scope>REVIEW</scope>
</reference>
<reference key="8">
    <citation type="journal article" date="2009" name="Science">
        <title>Motile cilia of human airway epithelia are chemosensory.</title>
        <authorList>
            <person name="Shah A.S."/>
            <person name="Ben-Shahar Y."/>
            <person name="Moninger T.O."/>
            <person name="Kline J.N."/>
            <person name="Welsh M.J."/>
        </authorList>
    </citation>
    <scope>FUNCTION</scope>
    <scope>SUBCELLULAR LOCATION</scope>
    <scope>TISSUE SPECIFICITY</scope>
</reference>
<evidence type="ECO:0000255" key="1"/>
<evidence type="ECO:0000269" key="2">
    <source>
    </source>
</evidence>
<evidence type="ECO:0000305" key="3"/>
<proteinExistence type="evidence at protein level"/>
<protein>
    <recommendedName>
        <fullName>Taste receptor type 2 member 4</fullName>
        <shortName>T2R4</shortName>
    </recommendedName>
</protein>
<comment type="function">
    <text evidence="2">Gustducin-coupled receptor for denatonium and N(6)-propyl-2-thiouracil implicated in the perception of bitter compounds in the oral cavity and the gastrointestinal tract. Signals through PLCB2 and the calcium-regulated cation channel TRPM5. In airway epithelial cells, binding of denatonium increases the intracellular calcium ion concentration and stimulates ciliary beat frequency.</text>
</comment>
<comment type="subcellular location">
    <subcellularLocation>
        <location evidence="2">Membrane</location>
        <topology evidence="2">Multi-pass membrane protein</topology>
    </subcellularLocation>
    <subcellularLocation>
        <location evidence="2">Cell projection</location>
        <location evidence="2">Cilium membrane</location>
    </subcellularLocation>
    <text>In airway epithelial cells, localizes to motile cilia.</text>
</comment>
<comment type="tissue specificity">
    <text evidence="2">Expressed in subsets of taste receptor cells of the tongue and palate epithelium and exclusively in gustducin-positive cells. Expressed on airway ciliated epithelium.</text>
</comment>
<comment type="miscellaneous">
    <text>Several bitter taste receptors are expressed in a single taste receptor cell.</text>
</comment>
<comment type="similarity">
    <text evidence="3">Belongs to the G-protein coupled receptor T2R family.</text>
</comment>
<comment type="online information" name="Protein Spotlight">
    <link uri="https://www.proteinspotlight.org/back_issues/119"/>
    <text>A tail of protection - Issue 119 of July 2010</text>
</comment>
<accession>Q9NYW5</accession>
<accession>Q645W5</accession>
<accession>Q75MV8</accession>
<feature type="chain" id="PRO_0000082205" description="Taste receptor type 2 member 4">
    <location>
        <begin position="1"/>
        <end position="299"/>
    </location>
</feature>
<feature type="topological domain" description="Extracellular" evidence="1">
    <location>
        <begin position="1"/>
        <end position="9"/>
    </location>
</feature>
<feature type="transmembrane region" description="Helical; Name=1" evidence="1">
    <location>
        <begin position="10"/>
        <end position="30"/>
    </location>
</feature>
<feature type="topological domain" description="Cytoplasmic" evidence="1">
    <location>
        <begin position="31"/>
        <end position="46"/>
    </location>
</feature>
<feature type="transmembrane region" description="Helical; Name=2" evidence="1">
    <location>
        <begin position="47"/>
        <end position="67"/>
    </location>
</feature>
<feature type="topological domain" description="Extracellular" evidence="1">
    <location>
        <begin position="68"/>
        <end position="81"/>
    </location>
</feature>
<feature type="transmembrane region" description="Helical; Name=3" evidence="1">
    <location>
        <begin position="82"/>
        <end position="102"/>
    </location>
</feature>
<feature type="topological domain" description="Cytoplasmic" evidence="1">
    <location>
        <begin position="103"/>
        <end position="131"/>
    </location>
</feature>
<feature type="transmembrane region" description="Helical; Name=4" evidence="1">
    <location>
        <begin position="132"/>
        <end position="152"/>
    </location>
</feature>
<feature type="topological domain" description="Extracellular" evidence="1">
    <location>
        <begin position="153"/>
        <end position="172"/>
    </location>
</feature>
<feature type="transmembrane region" description="Helical; Name=5" evidence="1">
    <location>
        <begin position="173"/>
        <end position="193"/>
    </location>
</feature>
<feature type="topological domain" description="Cytoplasmic" evidence="1">
    <location>
        <begin position="194"/>
        <end position="230"/>
    </location>
</feature>
<feature type="transmembrane region" description="Helical; Name=6" evidence="1">
    <location>
        <begin position="231"/>
        <end position="251"/>
    </location>
</feature>
<feature type="topological domain" description="Extracellular" evidence="1">
    <location>
        <begin position="252"/>
        <end position="262"/>
    </location>
</feature>
<feature type="transmembrane region" description="Helical; Name=7" evidence="1">
    <location>
        <begin position="263"/>
        <end position="283"/>
    </location>
</feature>
<feature type="topological domain" description="Cytoplasmic" evidence="1">
    <location>
        <begin position="284"/>
        <end position="299"/>
    </location>
</feature>
<feature type="glycosylation site" description="N-linked (GlcNAc...) asparagine" evidence="1">
    <location>
        <position position="164"/>
    </location>
</feature>
<feature type="glycosylation site" description="N-linked (GlcNAc...) asparagine" evidence="1">
    <location>
        <position position="165"/>
    </location>
</feature>
<feature type="glycosylation site" description="N-linked (GlcNAc...) asparagine" evidence="1">
    <location>
        <position position="169"/>
    </location>
</feature>
<feature type="sequence variant" id="VAR_034535" description="In dbSNP:rs2233995.">
    <original>R</original>
    <variation>Q</variation>
    <location>
        <position position="3"/>
    </location>
</feature>
<feature type="sequence variant" id="VAR_034536" description="In dbSNP:rs2233998.">
    <original>F</original>
    <variation>S</variation>
    <location>
        <position position="7"/>
    </location>
</feature>
<feature type="sequence variant" id="VAR_053341" description="In dbSNP:rs2233999.">
    <original>F</original>
    <variation>L</variation>
    <location>
        <position position="62"/>
    </location>
</feature>
<feature type="sequence variant" id="VAR_020200" description="In dbSNP:rs2234000.">
    <original>T</original>
    <variation>M</variation>
    <location>
        <position position="74"/>
    </location>
</feature>
<feature type="sequence variant" id="VAR_020201" description="In dbSNP:rs2234001.">
    <original>V</original>
    <variation>L</variation>
    <location>
        <position position="96"/>
    </location>
</feature>
<feature type="sequence variant" id="VAR_020202" description="In dbSNP:rs2234002.">
    <original>S</original>
    <variation>N</variation>
    <location>
        <position position="171"/>
    </location>
</feature>
<feature type="sequence variant" id="VAR_053342" description="In dbSNP:rs2234003.">
    <original>I</original>
    <variation>V</variation>
    <location>
        <position position="191"/>
    </location>
</feature>